<sequence length="152" mass="16971">MSEKYIVTWDMLQIHARKLASRLMPSEQWKGIIAVSRGGLVPGALLARELGIRHVDTVCISSYDHDNQRELKVLKRAEGDGEGFIVIDDLVDTGGTAVAIREMYPKAHFVTIFAKPAGRPLVDDYVVDIPQDTWIEQPWDMGVVFVPPISGR</sequence>
<comment type="function">
    <text evidence="1">Purine salvage pathway enzyme that catalyzes the transfer of the ribosyl-5-phosphate group from 5-phospho-alpha-D-ribose 1-diphosphate (PRPP) to the N9 position of the 6-oxopurines guanine and xanthine to form the corresponding ribonucleotides GMP (guanosine 5'-monophosphate) and XMP (xanthosine 5'-monophosphate), with the release of PPi. To a lesser extent, also acts on hypoxanthine.</text>
</comment>
<comment type="catalytic activity">
    <reaction evidence="1">
        <text>GMP + diphosphate = guanine + 5-phospho-alpha-D-ribose 1-diphosphate</text>
        <dbReference type="Rhea" id="RHEA:25424"/>
        <dbReference type="ChEBI" id="CHEBI:16235"/>
        <dbReference type="ChEBI" id="CHEBI:33019"/>
        <dbReference type="ChEBI" id="CHEBI:58017"/>
        <dbReference type="ChEBI" id="CHEBI:58115"/>
    </reaction>
    <physiologicalReaction direction="right-to-left" evidence="1">
        <dbReference type="Rhea" id="RHEA:25426"/>
    </physiologicalReaction>
</comment>
<comment type="catalytic activity">
    <reaction evidence="1">
        <text>XMP + diphosphate = xanthine + 5-phospho-alpha-D-ribose 1-diphosphate</text>
        <dbReference type="Rhea" id="RHEA:10800"/>
        <dbReference type="ChEBI" id="CHEBI:17712"/>
        <dbReference type="ChEBI" id="CHEBI:33019"/>
        <dbReference type="ChEBI" id="CHEBI:57464"/>
        <dbReference type="ChEBI" id="CHEBI:58017"/>
        <dbReference type="EC" id="2.4.2.22"/>
    </reaction>
    <physiologicalReaction direction="right-to-left" evidence="1">
        <dbReference type="Rhea" id="RHEA:10802"/>
    </physiologicalReaction>
</comment>
<comment type="catalytic activity">
    <reaction evidence="1">
        <text>IMP + diphosphate = hypoxanthine + 5-phospho-alpha-D-ribose 1-diphosphate</text>
        <dbReference type="Rhea" id="RHEA:17973"/>
        <dbReference type="ChEBI" id="CHEBI:17368"/>
        <dbReference type="ChEBI" id="CHEBI:33019"/>
        <dbReference type="ChEBI" id="CHEBI:58017"/>
        <dbReference type="ChEBI" id="CHEBI:58053"/>
    </reaction>
    <physiologicalReaction direction="right-to-left" evidence="1">
        <dbReference type="Rhea" id="RHEA:17975"/>
    </physiologicalReaction>
</comment>
<comment type="cofactor">
    <cofactor evidence="1">
        <name>Mg(2+)</name>
        <dbReference type="ChEBI" id="CHEBI:18420"/>
    </cofactor>
</comment>
<comment type="pathway">
    <text evidence="1">Purine metabolism; GMP biosynthesis via salvage pathway; GMP from guanine: step 1/1.</text>
</comment>
<comment type="pathway">
    <text evidence="1">Purine metabolism; XMP biosynthesis via salvage pathway; XMP from xanthine: step 1/1.</text>
</comment>
<comment type="subunit">
    <text evidence="1">Homotetramer.</text>
</comment>
<comment type="subcellular location">
    <subcellularLocation>
        <location evidence="1">Cell inner membrane</location>
        <topology evidence="1">Peripheral membrane protein</topology>
    </subcellularLocation>
</comment>
<comment type="similarity">
    <text evidence="1">Belongs to the purine/pyrimidine phosphoribosyltransferase family. XGPT subfamily.</text>
</comment>
<feature type="chain" id="PRO_1000070605" description="Xanthine-guanine phosphoribosyltransferase">
    <location>
        <begin position="1"/>
        <end position="152"/>
    </location>
</feature>
<feature type="binding site" evidence="1">
    <location>
        <begin position="37"/>
        <end position="38"/>
    </location>
    <ligand>
        <name>5-phospho-alpha-D-ribose 1-diphosphate</name>
        <dbReference type="ChEBI" id="CHEBI:58017"/>
    </ligand>
</feature>
<feature type="binding site" evidence="1">
    <location>
        <position position="69"/>
    </location>
    <ligand>
        <name>5-phospho-alpha-D-ribose 1-diphosphate</name>
        <dbReference type="ChEBI" id="CHEBI:58017"/>
    </ligand>
</feature>
<feature type="binding site" evidence="1">
    <location>
        <position position="69"/>
    </location>
    <ligand>
        <name>GMP</name>
        <dbReference type="ChEBI" id="CHEBI:58115"/>
    </ligand>
</feature>
<feature type="binding site" evidence="1">
    <location>
        <begin position="88"/>
        <end position="96"/>
    </location>
    <ligand>
        <name>5-phospho-alpha-D-ribose 1-diphosphate</name>
        <dbReference type="ChEBI" id="CHEBI:58017"/>
    </ligand>
</feature>
<feature type="binding site" evidence="1">
    <location>
        <position position="89"/>
    </location>
    <ligand>
        <name>Mg(2+)</name>
        <dbReference type="ChEBI" id="CHEBI:18420"/>
    </ligand>
</feature>
<feature type="binding site" evidence="1">
    <location>
        <begin position="92"/>
        <end position="96"/>
    </location>
    <ligand>
        <name>GMP</name>
        <dbReference type="ChEBI" id="CHEBI:58115"/>
    </ligand>
</feature>
<feature type="binding site" evidence="1">
    <location>
        <position position="92"/>
    </location>
    <ligand>
        <name>guanine</name>
        <dbReference type="ChEBI" id="CHEBI:16235"/>
    </ligand>
</feature>
<feature type="binding site" evidence="1">
    <location>
        <position position="92"/>
    </location>
    <ligand>
        <name>xanthine</name>
        <dbReference type="ChEBI" id="CHEBI:17712"/>
    </ligand>
</feature>
<feature type="binding site" evidence="1">
    <location>
        <begin position="134"/>
        <end position="135"/>
    </location>
    <ligand>
        <name>GMP</name>
        <dbReference type="ChEBI" id="CHEBI:58115"/>
    </ligand>
</feature>
<feature type="binding site" evidence="1">
    <location>
        <position position="135"/>
    </location>
    <ligand>
        <name>guanine</name>
        <dbReference type="ChEBI" id="CHEBI:16235"/>
    </ligand>
</feature>
<feature type="binding site" evidence="1">
    <location>
        <position position="135"/>
    </location>
    <ligand>
        <name>xanthine</name>
        <dbReference type="ChEBI" id="CHEBI:17712"/>
    </ligand>
</feature>
<protein>
    <recommendedName>
        <fullName evidence="1">Xanthine-guanine phosphoribosyltransferase</fullName>
        <shortName evidence="1">XGPRT</shortName>
        <ecNumber evidence="1">2.4.2.-</ecNumber>
        <ecNumber evidence="1">2.4.2.22</ecNumber>
    </recommendedName>
    <alternativeName>
        <fullName evidence="1">Xanthine phosphoribosyltransferase</fullName>
    </alternativeName>
</protein>
<evidence type="ECO:0000255" key="1">
    <source>
        <dbReference type="HAMAP-Rule" id="MF_01903"/>
    </source>
</evidence>
<proteinExistence type="inferred from homology"/>
<accession>A7ZHZ7</accession>
<keyword id="KW-0997">Cell inner membrane</keyword>
<keyword id="KW-1003">Cell membrane</keyword>
<keyword id="KW-0328">Glycosyltransferase</keyword>
<keyword id="KW-0460">Magnesium</keyword>
<keyword id="KW-0472">Membrane</keyword>
<keyword id="KW-0479">Metal-binding</keyword>
<keyword id="KW-0660">Purine salvage</keyword>
<keyword id="KW-1185">Reference proteome</keyword>
<keyword id="KW-0808">Transferase</keyword>
<dbReference type="EC" id="2.4.2.-" evidence="1"/>
<dbReference type="EC" id="2.4.2.22" evidence="1"/>
<dbReference type="EMBL" id="CP000800">
    <property type="protein sequence ID" value="ABV17281.1"/>
    <property type="molecule type" value="Genomic_DNA"/>
</dbReference>
<dbReference type="RefSeq" id="WP_001291990.1">
    <property type="nucleotide sequence ID" value="NC_009801.1"/>
</dbReference>
<dbReference type="SMR" id="A7ZHZ7"/>
<dbReference type="GeneID" id="93777155"/>
<dbReference type="KEGG" id="ecw:EcE24377A_0270"/>
<dbReference type="HOGENOM" id="CLU_080904_3_0_6"/>
<dbReference type="UniPathway" id="UPA00602">
    <property type="reaction ID" value="UER00658"/>
</dbReference>
<dbReference type="UniPathway" id="UPA00909">
    <property type="reaction ID" value="UER00887"/>
</dbReference>
<dbReference type="Proteomes" id="UP000001122">
    <property type="component" value="Chromosome"/>
</dbReference>
<dbReference type="GO" id="GO:0005829">
    <property type="term" value="C:cytosol"/>
    <property type="evidence" value="ECO:0007669"/>
    <property type="project" value="TreeGrafter"/>
</dbReference>
<dbReference type="GO" id="GO:0005886">
    <property type="term" value="C:plasma membrane"/>
    <property type="evidence" value="ECO:0007669"/>
    <property type="project" value="UniProtKB-SubCell"/>
</dbReference>
<dbReference type="GO" id="GO:0052657">
    <property type="term" value="F:guanine phosphoribosyltransferase activity"/>
    <property type="evidence" value="ECO:0007669"/>
    <property type="project" value="RHEA"/>
</dbReference>
<dbReference type="GO" id="GO:0004422">
    <property type="term" value="F:hypoxanthine phosphoribosyltransferase activity"/>
    <property type="evidence" value="ECO:0007669"/>
    <property type="project" value="RHEA"/>
</dbReference>
<dbReference type="GO" id="GO:0000287">
    <property type="term" value="F:magnesium ion binding"/>
    <property type="evidence" value="ECO:0007669"/>
    <property type="project" value="UniProtKB-UniRule"/>
</dbReference>
<dbReference type="GO" id="GO:0000310">
    <property type="term" value="F:xanthine phosphoribosyltransferase activity"/>
    <property type="evidence" value="ECO:0007669"/>
    <property type="project" value="UniProtKB-UniRule"/>
</dbReference>
<dbReference type="GO" id="GO:0032263">
    <property type="term" value="P:GMP salvage"/>
    <property type="evidence" value="ECO:0007669"/>
    <property type="project" value="UniProtKB-UniRule"/>
</dbReference>
<dbReference type="GO" id="GO:0032264">
    <property type="term" value="P:IMP salvage"/>
    <property type="evidence" value="ECO:0007669"/>
    <property type="project" value="TreeGrafter"/>
</dbReference>
<dbReference type="GO" id="GO:0006166">
    <property type="term" value="P:purine ribonucleoside salvage"/>
    <property type="evidence" value="ECO:0007669"/>
    <property type="project" value="UniProtKB-KW"/>
</dbReference>
<dbReference type="GO" id="GO:0032265">
    <property type="term" value="P:XMP salvage"/>
    <property type="evidence" value="ECO:0007669"/>
    <property type="project" value="UniProtKB-UniRule"/>
</dbReference>
<dbReference type="CDD" id="cd06223">
    <property type="entry name" value="PRTases_typeI"/>
    <property type="match status" value="1"/>
</dbReference>
<dbReference type="FunFam" id="3.40.50.2020:FF:000009">
    <property type="entry name" value="Xanthine phosphoribosyltransferase"/>
    <property type="match status" value="1"/>
</dbReference>
<dbReference type="Gene3D" id="3.40.50.2020">
    <property type="match status" value="1"/>
</dbReference>
<dbReference type="HAMAP" id="MF_01903">
    <property type="entry name" value="XGPRT"/>
    <property type="match status" value="1"/>
</dbReference>
<dbReference type="InterPro" id="IPR000836">
    <property type="entry name" value="PRibTrfase_dom"/>
</dbReference>
<dbReference type="InterPro" id="IPR029057">
    <property type="entry name" value="PRTase-like"/>
</dbReference>
<dbReference type="InterPro" id="IPR023747">
    <property type="entry name" value="Xanthine_Guanine_PRibTrfase"/>
</dbReference>
<dbReference type="NCBIfam" id="NF006613">
    <property type="entry name" value="PRK09177.1"/>
    <property type="match status" value="1"/>
</dbReference>
<dbReference type="PANTHER" id="PTHR39563">
    <property type="entry name" value="XANTHINE PHOSPHORIBOSYLTRANSFERASE"/>
    <property type="match status" value="1"/>
</dbReference>
<dbReference type="PANTHER" id="PTHR39563:SF1">
    <property type="entry name" value="XANTHINE-GUANINE PHOSPHORIBOSYLTRANSFERASE"/>
    <property type="match status" value="1"/>
</dbReference>
<dbReference type="Pfam" id="PF00156">
    <property type="entry name" value="Pribosyltran"/>
    <property type="match status" value="1"/>
</dbReference>
<dbReference type="SUPFAM" id="SSF53271">
    <property type="entry name" value="PRTase-like"/>
    <property type="match status" value="1"/>
</dbReference>
<dbReference type="PROSITE" id="PS00103">
    <property type="entry name" value="PUR_PYR_PR_TRANSFER"/>
    <property type="match status" value="1"/>
</dbReference>
<reference key="1">
    <citation type="journal article" date="2008" name="J. Bacteriol.">
        <title>The pangenome structure of Escherichia coli: comparative genomic analysis of E. coli commensal and pathogenic isolates.</title>
        <authorList>
            <person name="Rasko D.A."/>
            <person name="Rosovitz M.J."/>
            <person name="Myers G.S.A."/>
            <person name="Mongodin E.F."/>
            <person name="Fricke W.F."/>
            <person name="Gajer P."/>
            <person name="Crabtree J."/>
            <person name="Sebaihia M."/>
            <person name="Thomson N.R."/>
            <person name="Chaudhuri R."/>
            <person name="Henderson I.R."/>
            <person name="Sperandio V."/>
            <person name="Ravel J."/>
        </authorList>
    </citation>
    <scope>NUCLEOTIDE SEQUENCE [LARGE SCALE GENOMIC DNA]</scope>
    <source>
        <strain>E24377A / ETEC</strain>
    </source>
</reference>
<organism>
    <name type="scientific">Escherichia coli O139:H28 (strain E24377A / ETEC)</name>
    <dbReference type="NCBI Taxonomy" id="331111"/>
    <lineage>
        <taxon>Bacteria</taxon>
        <taxon>Pseudomonadati</taxon>
        <taxon>Pseudomonadota</taxon>
        <taxon>Gammaproteobacteria</taxon>
        <taxon>Enterobacterales</taxon>
        <taxon>Enterobacteriaceae</taxon>
        <taxon>Escherichia</taxon>
    </lineage>
</organism>
<gene>
    <name evidence="1" type="primary">gpt</name>
    <name type="ordered locus">EcE24377A_0270</name>
</gene>
<name>XGPT_ECO24</name>